<organism>
    <name type="scientific">Archaeoglobus fulgidus (strain ATCC 49558 / DSM 4304 / JCM 9628 / NBRC 100126 / VC-16)</name>
    <dbReference type="NCBI Taxonomy" id="224325"/>
    <lineage>
        <taxon>Archaea</taxon>
        <taxon>Methanobacteriati</taxon>
        <taxon>Methanobacteriota</taxon>
        <taxon>Archaeoglobi</taxon>
        <taxon>Archaeoglobales</taxon>
        <taxon>Archaeoglobaceae</taxon>
        <taxon>Archaeoglobus</taxon>
    </lineage>
</organism>
<keyword id="KW-1185">Reference proteome</keyword>
<keyword id="KW-0678">Repressor</keyword>
<keyword id="KW-0687">Ribonucleoprotein</keyword>
<keyword id="KW-0689">Ribosomal protein</keyword>
<keyword id="KW-0694">RNA-binding</keyword>
<keyword id="KW-0699">rRNA-binding</keyword>
<keyword id="KW-0810">Translation regulation</keyword>
<keyword id="KW-0820">tRNA-binding</keyword>
<sequence length="215" mass="23962">MIVDKDKLVKSIEEAIKNGKKRRFVETVEMAVNLRNVDMKKPENRIDTVVNLPHGLGKPRKIGVFAKGDTALKAKEAGADVVITPEEIDELAKDKRRAKKLANSIDFFIAEAPLMPEIGRKLGPVLGPRGKIPQPIPPLADPKPFIDRLRNSVKIRTRDKTTFHAPIGSENMDVEKIAENAMEILKVVENKYENPTQVVKSVYVKKTMGPAVRVV</sequence>
<name>RL1_ARCFU</name>
<accession>O28782</accession>
<feature type="chain" id="PRO_0000125793" description="Large ribosomal subunit protein uL1">
    <location>
        <begin position="1"/>
        <end position="215"/>
    </location>
</feature>
<dbReference type="EMBL" id="AE000782">
    <property type="protein sequence ID" value="AAB89750.1"/>
    <property type="molecule type" value="Genomic_DNA"/>
</dbReference>
<dbReference type="PIR" id="A69436">
    <property type="entry name" value="A69436"/>
</dbReference>
<dbReference type="RefSeq" id="WP_010878987.1">
    <property type="nucleotide sequence ID" value="NC_000917.1"/>
</dbReference>
<dbReference type="SMR" id="O28782"/>
<dbReference type="STRING" id="224325.AF_1490"/>
<dbReference type="PaxDb" id="224325-AF_1490"/>
<dbReference type="EnsemblBacteria" id="AAB89750">
    <property type="protein sequence ID" value="AAB89750"/>
    <property type="gene ID" value="AF_1490"/>
</dbReference>
<dbReference type="KEGG" id="afu:AF_1490"/>
<dbReference type="eggNOG" id="arCOG04289">
    <property type="taxonomic scope" value="Archaea"/>
</dbReference>
<dbReference type="HOGENOM" id="CLU_062853_4_0_2"/>
<dbReference type="OrthoDB" id="10382at2157"/>
<dbReference type="PhylomeDB" id="O28782"/>
<dbReference type="Proteomes" id="UP000002199">
    <property type="component" value="Chromosome"/>
</dbReference>
<dbReference type="GO" id="GO:0015934">
    <property type="term" value="C:large ribosomal subunit"/>
    <property type="evidence" value="ECO:0007669"/>
    <property type="project" value="InterPro"/>
</dbReference>
<dbReference type="GO" id="GO:0019843">
    <property type="term" value="F:rRNA binding"/>
    <property type="evidence" value="ECO:0007669"/>
    <property type="project" value="UniProtKB-UniRule"/>
</dbReference>
<dbReference type="GO" id="GO:0003735">
    <property type="term" value="F:structural constituent of ribosome"/>
    <property type="evidence" value="ECO:0007669"/>
    <property type="project" value="InterPro"/>
</dbReference>
<dbReference type="GO" id="GO:0000049">
    <property type="term" value="F:tRNA binding"/>
    <property type="evidence" value="ECO:0007669"/>
    <property type="project" value="UniProtKB-KW"/>
</dbReference>
<dbReference type="GO" id="GO:0006417">
    <property type="term" value="P:regulation of translation"/>
    <property type="evidence" value="ECO:0007669"/>
    <property type="project" value="UniProtKB-KW"/>
</dbReference>
<dbReference type="GO" id="GO:0006412">
    <property type="term" value="P:translation"/>
    <property type="evidence" value="ECO:0007669"/>
    <property type="project" value="UniProtKB-UniRule"/>
</dbReference>
<dbReference type="CDD" id="cd00403">
    <property type="entry name" value="Ribosomal_L1"/>
    <property type="match status" value="1"/>
</dbReference>
<dbReference type="FunFam" id="3.40.50.790:FF:000005">
    <property type="entry name" value="50S ribosomal protein L1"/>
    <property type="match status" value="1"/>
</dbReference>
<dbReference type="Gene3D" id="3.30.190.20">
    <property type="match status" value="1"/>
</dbReference>
<dbReference type="Gene3D" id="3.40.50.790">
    <property type="match status" value="1"/>
</dbReference>
<dbReference type="HAMAP" id="MF_01318_A">
    <property type="entry name" value="Ribosomal_uL1_A"/>
    <property type="match status" value="1"/>
</dbReference>
<dbReference type="InterPro" id="IPR002143">
    <property type="entry name" value="Ribosomal_uL1"/>
</dbReference>
<dbReference type="InterPro" id="IPR023674">
    <property type="entry name" value="Ribosomal_uL1-like"/>
</dbReference>
<dbReference type="InterPro" id="IPR028364">
    <property type="entry name" value="Ribosomal_uL1/biogenesis"/>
</dbReference>
<dbReference type="InterPro" id="IPR016095">
    <property type="entry name" value="Ribosomal_uL1_3-a/b-sand"/>
</dbReference>
<dbReference type="InterPro" id="IPR023669">
    <property type="entry name" value="Ribosomal_uL1_arc"/>
</dbReference>
<dbReference type="InterPro" id="IPR023673">
    <property type="entry name" value="Ribosomal_uL1_CS"/>
</dbReference>
<dbReference type="NCBIfam" id="NF003244">
    <property type="entry name" value="PRK04203.1"/>
    <property type="match status" value="1"/>
</dbReference>
<dbReference type="PANTHER" id="PTHR36427">
    <property type="entry name" value="54S RIBOSOMAL PROTEIN L1, MITOCHONDRIAL"/>
    <property type="match status" value="1"/>
</dbReference>
<dbReference type="PANTHER" id="PTHR36427:SF3">
    <property type="entry name" value="LARGE RIBOSOMAL SUBUNIT PROTEIN UL1M"/>
    <property type="match status" value="1"/>
</dbReference>
<dbReference type="Pfam" id="PF00687">
    <property type="entry name" value="Ribosomal_L1"/>
    <property type="match status" value="1"/>
</dbReference>
<dbReference type="PIRSF" id="PIRSF002155">
    <property type="entry name" value="Ribosomal_L1"/>
    <property type="match status" value="1"/>
</dbReference>
<dbReference type="SUPFAM" id="SSF56808">
    <property type="entry name" value="Ribosomal protein L1"/>
    <property type="match status" value="1"/>
</dbReference>
<dbReference type="PROSITE" id="PS01199">
    <property type="entry name" value="RIBOSOMAL_L1"/>
    <property type="match status" value="1"/>
</dbReference>
<protein>
    <recommendedName>
        <fullName evidence="1">Large ribosomal subunit protein uL1</fullName>
    </recommendedName>
    <alternativeName>
        <fullName evidence="2">50S ribosomal protein L1</fullName>
    </alternativeName>
</protein>
<reference key="1">
    <citation type="journal article" date="1997" name="Nature">
        <title>The complete genome sequence of the hyperthermophilic, sulphate-reducing archaeon Archaeoglobus fulgidus.</title>
        <authorList>
            <person name="Klenk H.-P."/>
            <person name="Clayton R.A."/>
            <person name="Tomb J.-F."/>
            <person name="White O."/>
            <person name="Nelson K.E."/>
            <person name="Ketchum K.A."/>
            <person name="Dodson R.J."/>
            <person name="Gwinn M.L."/>
            <person name="Hickey E.K."/>
            <person name="Peterson J.D."/>
            <person name="Richardson D.L."/>
            <person name="Kerlavage A.R."/>
            <person name="Graham D.E."/>
            <person name="Kyrpides N.C."/>
            <person name="Fleischmann R.D."/>
            <person name="Quackenbush J."/>
            <person name="Lee N.H."/>
            <person name="Sutton G.G."/>
            <person name="Gill S.R."/>
            <person name="Kirkness E.F."/>
            <person name="Dougherty B.A."/>
            <person name="McKenney K."/>
            <person name="Adams M.D."/>
            <person name="Loftus B.J."/>
            <person name="Peterson S.N."/>
            <person name="Reich C.I."/>
            <person name="McNeil L.K."/>
            <person name="Badger J.H."/>
            <person name="Glodek A."/>
            <person name="Zhou L."/>
            <person name="Overbeek R."/>
            <person name="Gocayne J.D."/>
            <person name="Weidman J.F."/>
            <person name="McDonald L.A."/>
            <person name="Utterback T.R."/>
            <person name="Cotton M.D."/>
            <person name="Spriggs T."/>
            <person name="Artiach P."/>
            <person name="Kaine B.P."/>
            <person name="Sykes S.M."/>
            <person name="Sadow P.W."/>
            <person name="D'Andrea K.P."/>
            <person name="Bowman C."/>
            <person name="Fujii C."/>
            <person name="Garland S.A."/>
            <person name="Mason T.M."/>
            <person name="Olsen G.J."/>
            <person name="Fraser C.M."/>
            <person name="Smith H.O."/>
            <person name="Woese C.R."/>
            <person name="Venter J.C."/>
        </authorList>
    </citation>
    <scope>NUCLEOTIDE SEQUENCE [LARGE SCALE GENOMIC DNA]</scope>
    <source>
        <strain>ATCC 49558 / DSM 4304 / JCM 9628 / NBRC 100126 / VC-16</strain>
    </source>
</reference>
<comment type="function">
    <text evidence="1">Binds directly to 23S rRNA. Probably involved in E site tRNA release.</text>
</comment>
<comment type="function">
    <text evidence="1">Protein L1 is also a translational repressor protein, it controls the translation of its operon by binding to its mRNA.</text>
</comment>
<comment type="subunit">
    <text evidence="1">Part of the 50S ribosomal subunit.</text>
</comment>
<comment type="similarity">
    <text evidence="1">Belongs to the universal ribosomal protein uL1 family.</text>
</comment>
<gene>
    <name evidence="1" type="primary">rpl1</name>
    <name type="ordered locus">AF_1490</name>
</gene>
<evidence type="ECO:0000255" key="1">
    <source>
        <dbReference type="HAMAP-Rule" id="MF_01318"/>
    </source>
</evidence>
<evidence type="ECO:0000305" key="2"/>
<proteinExistence type="inferred from homology"/>